<feature type="chain" id="PRO_0000264701" description="Acetylglutamate kinase">
    <location>
        <begin position="1"/>
        <end position="295"/>
    </location>
</feature>
<feature type="binding site" evidence="1">
    <location>
        <begin position="64"/>
        <end position="65"/>
    </location>
    <ligand>
        <name>substrate</name>
    </ligand>
</feature>
<feature type="binding site" evidence="1">
    <location>
        <position position="86"/>
    </location>
    <ligand>
        <name>substrate</name>
    </ligand>
</feature>
<feature type="binding site" evidence="1">
    <location>
        <position position="190"/>
    </location>
    <ligand>
        <name>substrate</name>
    </ligand>
</feature>
<feature type="site" description="Transition state stabilizer" evidence="1">
    <location>
        <position position="29"/>
    </location>
</feature>
<feature type="site" description="Transition state stabilizer" evidence="1">
    <location>
        <position position="250"/>
    </location>
</feature>
<comment type="function">
    <text evidence="1">Catalyzes the ATP-dependent phosphorylation of N-acetyl-L-glutamate.</text>
</comment>
<comment type="catalytic activity">
    <reaction evidence="1">
        <text>N-acetyl-L-glutamate + ATP = N-acetyl-L-glutamyl 5-phosphate + ADP</text>
        <dbReference type="Rhea" id="RHEA:14629"/>
        <dbReference type="ChEBI" id="CHEBI:30616"/>
        <dbReference type="ChEBI" id="CHEBI:44337"/>
        <dbReference type="ChEBI" id="CHEBI:57936"/>
        <dbReference type="ChEBI" id="CHEBI:456216"/>
        <dbReference type="EC" id="2.7.2.8"/>
    </reaction>
</comment>
<comment type="pathway">
    <text evidence="1">Amino-acid biosynthesis; L-arginine biosynthesis; N(2)-acetyl-L-ornithine from L-glutamate: step 2/4.</text>
</comment>
<comment type="subcellular location">
    <subcellularLocation>
        <location evidence="1">Cytoplasm</location>
    </subcellularLocation>
</comment>
<comment type="similarity">
    <text evidence="1">Belongs to the acetylglutamate kinase family. ArgB subfamily.</text>
</comment>
<proteinExistence type="inferred from homology"/>
<accession>Q30ZT4</accession>
<organism>
    <name type="scientific">Oleidesulfovibrio alaskensis (strain ATCC BAA-1058 / DSM 17464 / G20)</name>
    <name type="common">Desulfovibrio alaskensis</name>
    <dbReference type="NCBI Taxonomy" id="207559"/>
    <lineage>
        <taxon>Bacteria</taxon>
        <taxon>Pseudomonadati</taxon>
        <taxon>Thermodesulfobacteriota</taxon>
        <taxon>Desulfovibrionia</taxon>
        <taxon>Desulfovibrionales</taxon>
        <taxon>Desulfovibrionaceae</taxon>
        <taxon>Oleidesulfovibrio</taxon>
    </lineage>
</organism>
<keyword id="KW-0028">Amino-acid biosynthesis</keyword>
<keyword id="KW-0055">Arginine biosynthesis</keyword>
<keyword id="KW-0067">ATP-binding</keyword>
<keyword id="KW-0963">Cytoplasm</keyword>
<keyword id="KW-0418">Kinase</keyword>
<keyword id="KW-0547">Nucleotide-binding</keyword>
<keyword id="KW-1185">Reference proteome</keyword>
<keyword id="KW-0808">Transferase</keyword>
<protein>
    <recommendedName>
        <fullName evidence="1">Acetylglutamate kinase</fullName>
        <ecNumber evidence="1">2.7.2.8</ecNumber>
    </recommendedName>
    <alternativeName>
        <fullName evidence="1">N-acetyl-L-glutamate 5-phosphotransferase</fullName>
    </alternativeName>
    <alternativeName>
        <fullName evidence="1">NAG kinase</fullName>
        <shortName evidence="1">NAGK</shortName>
    </alternativeName>
</protein>
<sequence>MQNDAFKSKVLIESLPYFRQFSGETVVIKYGGNAMIDESLKQAFALNIVLLKYVGVNPVVVHGGGPQIGRMLQQLNIPTNFREGLRVTDDATMDVVEMVLVGKVNKQIVNLLNLSGAKAVGLSGKDGQLIRARQMEMVISKEAQAPEIIDLGKVGEVTGVETKLLHSLQRDGFIPVIAPVGVDENGETYNINADLVAGAVAGALGAKRLLLLTDVPGILDKDGRLISSLDTARTMQLFEDGTLKGGMLPKVKCCLEALEDGVEKAMIIDGRIENCVLLELFTDHGIGTEITRACS</sequence>
<dbReference type="EC" id="2.7.2.8" evidence="1"/>
<dbReference type="EMBL" id="CP000112">
    <property type="protein sequence ID" value="ABB38812.1"/>
    <property type="molecule type" value="Genomic_DNA"/>
</dbReference>
<dbReference type="RefSeq" id="WP_011367920.1">
    <property type="nucleotide sequence ID" value="NC_007519.1"/>
</dbReference>
<dbReference type="SMR" id="Q30ZT4"/>
<dbReference type="STRING" id="207559.Dde_2015"/>
<dbReference type="KEGG" id="dde:Dde_2015"/>
<dbReference type="eggNOG" id="COG0548">
    <property type="taxonomic scope" value="Bacteria"/>
</dbReference>
<dbReference type="HOGENOM" id="CLU_053680_0_0_7"/>
<dbReference type="UniPathway" id="UPA00068">
    <property type="reaction ID" value="UER00107"/>
</dbReference>
<dbReference type="Proteomes" id="UP000002710">
    <property type="component" value="Chromosome"/>
</dbReference>
<dbReference type="GO" id="GO:0005737">
    <property type="term" value="C:cytoplasm"/>
    <property type="evidence" value="ECO:0007669"/>
    <property type="project" value="UniProtKB-SubCell"/>
</dbReference>
<dbReference type="GO" id="GO:0003991">
    <property type="term" value="F:acetylglutamate kinase activity"/>
    <property type="evidence" value="ECO:0007669"/>
    <property type="project" value="UniProtKB-UniRule"/>
</dbReference>
<dbReference type="GO" id="GO:0005524">
    <property type="term" value="F:ATP binding"/>
    <property type="evidence" value="ECO:0007669"/>
    <property type="project" value="UniProtKB-UniRule"/>
</dbReference>
<dbReference type="GO" id="GO:0042450">
    <property type="term" value="P:arginine biosynthetic process via ornithine"/>
    <property type="evidence" value="ECO:0007669"/>
    <property type="project" value="UniProtKB-UniRule"/>
</dbReference>
<dbReference type="GO" id="GO:0006526">
    <property type="term" value="P:L-arginine biosynthetic process"/>
    <property type="evidence" value="ECO:0007669"/>
    <property type="project" value="UniProtKB-UniPathway"/>
</dbReference>
<dbReference type="CDD" id="cd04250">
    <property type="entry name" value="AAK_NAGK-C"/>
    <property type="match status" value="1"/>
</dbReference>
<dbReference type="FunFam" id="3.40.1160.10:FF:000004">
    <property type="entry name" value="Acetylglutamate kinase"/>
    <property type="match status" value="1"/>
</dbReference>
<dbReference type="Gene3D" id="3.40.1160.10">
    <property type="entry name" value="Acetylglutamate kinase-like"/>
    <property type="match status" value="1"/>
</dbReference>
<dbReference type="HAMAP" id="MF_00082">
    <property type="entry name" value="ArgB"/>
    <property type="match status" value="1"/>
</dbReference>
<dbReference type="InterPro" id="IPR036393">
    <property type="entry name" value="AceGlu_kinase-like_sf"/>
</dbReference>
<dbReference type="InterPro" id="IPR004662">
    <property type="entry name" value="AcgluKinase_fam"/>
</dbReference>
<dbReference type="InterPro" id="IPR037528">
    <property type="entry name" value="ArgB"/>
</dbReference>
<dbReference type="InterPro" id="IPR001048">
    <property type="entry name" value="Asp/Glu/Uridylate_kinase"/>
</dbReference>
<dbReference type="InterPro" id="IPR001057">
    <property type="entry name" value="Glu/AcGlu_kinase"/>
</dbReference>
<dbReference type="InterPro" id="IPR041727">
    <property type="entry name" value="NAGK-C"/>
</dbReference>
<dbReference type="NCBIfam" id="TIGR00761">
    <property type="entry name" value="argB"/>
    <property type="match status" value="1"/>
</dbReference>
<dbReference type="PANTHER" id="PTHR23342">
    <property type="entry name" value="N-ACETYLGLUTAMATE SYNTHASE"/>
    <property type="match status" value="1"/>
</dbReference>
<dbReference type="PANTHER" id="PTHR23342:SF0">
    <property type="entry name" value="N-ACETYLGLUTAMATE SYNTHASE, MITOCHONDRIAL"/>
    <property type="match status" value="1"/>
</dbReference>
<dbReference type="Pfam" id="PF00696">
    <property type="entry name" value="AA_kinase"/>
    <property type="match status" value="1"/>
</dbReference>
<dbReference type="PIRSF" id="PIRSF000728">
    <property type="entry name" value="NAGK"/>
    <property type="match status" value="1"/>
</dbReference>
<dbReference type="PRINTS" id="PR00474">
    <property type="entry name" value="GLU5KINASE"/>
</dbReference>
<dbReference type="SUPFAM" id="SSF53633">
    <property type="entry name" value="Carbamate kinase-like"/>
    <property type="match status" value="1"/>
</dbReference>
<gene>
    <name evidence="1" type="primary">argB</name>
    <name type="ordered locus">Dde_2015</name>
</gene>
<reference key="1">
    <citation type="journal article" date="2011" name="J. Bacteriol.">
        <title>Complete genome sequence and updated annotation of Desulfovibrio alaskensis G20.</title>
        <authorList>
            <person name="Hauser L.J."/>
            <person name="Land M.L."/>
            <person name="Brown S.D."/>
            <person name="Larimer F."/>
            <person name="Keller K.L."/>
            <person name="Rapp-Giles B.J."/>
            <person name="Price M.N."/>
            <person name="Lin M."/>
            <person name="Bruce D.C."/>
            <person name="Detter J.C."/>
            <person name="Tapia R."/>
            <person name="Han C.S."/>
            <person name="Goodwin L.A."/>
            <person name="Cheng J.F."/>
            <person name="Pitluck S."/>
            <person name="Copeland A."/>
            <person name="Lucas S."/>
            <person name="Nolan M."/>
            <person name="Lapidus A.L."/>
            <person name="Palumbo A.V."/>
            <person name="Wall J.D."/>
        </authorList>
    </citation>
    <scope>NUCLEOTIDE SEQUENCE [LARGE SCALE GENOMIC DNA]</scope>
    <source>
        <strain>ATCC BAA-1058 / DSM 17464 / G20</strain>
    </source>
</reference>
<name>ARGB_OLEA2</name>
<evidence type="ECO:0000255" key="1">
    <source>
        <dbReference type="HAMAP-Rule" id="MF_00082"/>
    </source>
</evidence>